<evidence type="ECO:0000255" key="1">
    <source>
        <dbReference type="HAMAP-Rule" id="MF_01299"/>
    </source>
</evidence>
<evidence type="ECO:0000305" key="2"/>
<reference key="1">
    <citation type="submission" date="2006-03" db="EMBL/GenBank/DDBJ databases">
        <title>Complete sequence of Rhodopseudomonas palustris BisB5.</title>
        <authorList>
            <consortium name="US DOE Joint Genome Institute"/>
            <person name="Copeland A."/>
            <person name="Lucas S."/>
            <person name="Lapidus A."/>
            <person name="Barry K."/>
            <person name="Detter J.C."/>
            <person name="Glavina del Rio T."/>
            <person name="Hammon N."/>
            <person name="Israni S."/>
            <person name="Dalin E."/>
            <person name="Tice H."/>
            <person name="Pitluck S."/>
            <person name="Chain P."/>
            <person name="Malfatti S."/>
            <person name="Shin M."/>
            <person name="Vergez L."/>
            <person name="Schmutz J."/>
            <person name="Larimer F."/>
            <person name="Land M."/>
            <person name="Hauser L."/>
            <person name="Pelletier D.A."/>
            <person name="Kyrpides N."/>
            <person name="Lykidis A."/>
            <person name="Oda Y."/>
            <person name="Harwood C.S."/>
            <person name="Richardson P."/>
        </authorList>
    </citation>
    <scope>NUCLEOTIDE SEQUENCE [LARGE SCALE GENOMIC DNA]</scope>
    <source>
        <strain>BisB5</strain>
    </source>
</reference>
<feature type="chain" id="PRO_0000364078" description="Oxaloacetate decarboxylase">
    <location>
        <begin position="1"/>
        <end position="289"/>
    </location>
</feature>
<feature type="binding site" evidence="1">
    <location>
        <position position="47"/>
    </location>
    <ligand>
        <name>substrate</name>
    </ligand>
</feature>
<feature type="binding site" evidence="1">
    <location>
        <position position="85"/>
    </location>
    <ligand>
        <name>Mg(2+)</name>
        <dbReference type="ChEBI" id="CHEBI:18420"/>
    </ligand>
</feature>
<feature type="binding site" evidence="1">
    <location>
        <position position="156"/>
    </location>
    <ligand>
        <name>substrate</name>
    </ligand>
</feature>
<feature type="binding site" evidence="1">
    <location>
        <position position="232"/>
    </location>
    <ligand>
        <name>substrate</name>
    </ligand>
</feature>
<accession>Q135C1</accession>
<organism>
    <name type="scientific">Rhodopseudomonas palustris (strain BisB5)</name>
    <dbReference type="NCBI Taxonomy" id="316057"/>
    <lineage>
        <taxon>Bacteria</taxon>
        <taxon>Pseudomonadati</taxon>
        <taxon>Pseudomonadota</taxon>
        <taxon>Alphaproteobacteria</taxon>
        <taxon>Hyphomicrobiales</taxon>
        <taxon>Nitrobacteraceae</taxon>
        <taxon>Rhodopseudomonas</taxon>
    </lineage>
</organism>
<comment type="function">
    <text evidence="1">Catalyzes the decarboxylation of oxaloacetate into pyruvate. Seems to play a role in maintaining cellular concentrations of bicarbonate and pyruvate.</text>
</comment>
<comment type="catalytic activity">
    <reaction evidence="1">
        <text>oxaloacetate + H(+) = pyruvate + CO2</text>
        <dbReference type="Rhea" id="RHEA:15641"/>
        <dbReference type="ChEBI" id="CHEBI:15361"/>
        <dbReference type="ChEBI" id="CHEBI:15378"/>
        <dbReference type="ChEBI" id="CHEBI:16452"/>
        <dbReference type="ChEBI" id="CHEBI:16526"/>
        <dbReference type="EC" id="4.1.1.112"/>
    </reaction>
</comment>
<comment type="cofactor">
    <cofactor evidence="1">
        <name>Mg(2+)</name>
        <dbReference type="ChEBI" id="CHEBI:18420"/>
    </cofactor>
    <text evidence="1">Binds 1 Mg(2+) ion per subunit.</text>
</comment>
<comment type="subunit">
    <text evidence="1">Homotetramer; dimer of dimers.</text>
</comment>
<comment type="similarity">
    <text evidence="2">Belongs to the isocitrate lyase/PEP mutase superfamily. Oxaloacetate decarboxylase family.</text>
</comment>
<gene>
    <name type="ordered locus">RPD_3092</name>
</gene>
<sequence>MAWRNRRGALRAILSGSACVRPASVYDAISIRIADDLGFPLGMFGGSVASLAILGDPDIALITLTELAEQMRRMARAAALPVLVDADHGYGNALNVRRTVQELEAAGAAGLTIEDTLLPQAYGEASPQLISREEGLGKIKAALDARLDPSLVIVGRTGACAITSLDDAIDRAVAYQAAGVDALFFTGVKTRPQLDAIAAATTLPIVLGSPPAELTDWDYLAAQRVRIAVQGHAPIAAATEAVSKALSALRDGAAPKQLTGLASAELIDRVTRASLVEERGAQFLGLKRE</sequence>
<name>OADC_RHOPS</name>
<proteinExistence type="inferred from homology"/>
<dbReference type="EC" id="4.1.1.112" evidence="1"/>
<dbReference type="EMBL" id="CP000283">
    <property type="protein sequence ID" value="ABE40318.1"/>
    <property type="molecule type" value="Genomic_DNA"/>
</dbReference>
<dbReference type="SMR" id="Q135C1"/>
<dbReference type="STRING" id="316057.RPD_3092"/>
<dbReference type="KEGG" id="rpd:RPD_3092"/>
<dbReference type="eggNOG" id="COG2513">
    <property type="taxonomic scope" value="Bacteria"/>
</dbReference>
<dbReference type="HOGENOM" id="CLU_027389_3_2_5"/>
<dbReference type="BioCyc" id="RPAL316057:RPD_RS15530-MONOMER"/>
<dbReference type="Proteomes" id="UP000001818">
    <property type="component" value="Chromosome"/>
</dbReference>
<dbReference type="GO" id="GO:0000287">
    <property type="term" value="F:magnesium ion binding"/>
    <property type="evidence" value="ECO:0007669"/>
    <property type="project" value="UniProtKB-UniRule"/>
</dbReference>
<dbReference type="GO" id="GO:0046421">
    <property type="term" value="F:methylisocitrate lyase activity"/>
    <property type="evidence" value="ECO:0007669"/>
    <property type="project" value="TreeGrafter"/>
</dbReference>
<dbReference type="GO" id="GO:0008948">
    <property type="term" value="F:oxaloacetate decarboxylase activity"/>
    <property type="evidence" value="ECO:0007669"/>
    <property type="project" value="UniProtKB-UniRule"/>
</dbReference>
<dbReference type="GO" id="GO:0006107">
    <property type="term" value="P:oxaloacetate metabolic process"/>
    <property type="evidence" value="ECO:0007669"/>
    <property type="project" value="UniProtKB-UniRule"/>
</dbReference>
<dbReference type="GO" id="GO:0019629">
    <property type="term" value="P:propionate catabolic process, 2-methylcitrate cycle"/>
    <property type="evidence" value="ECO:0007669"/>
    <property type="project" value="TreeGrafter"/>
</dbReference>
<dbReference type="GO" id="GO:0042866">
    <property type="term" value="P:pyruvate biosynthetic process"/>
    <property type="evidence" value="ECO:0007669"/>
    <property type="project" value="UniProtKB-UniRule"/>
</dbReference>
<dbReference type="CDD" id="cd00377">
    <property type="entry name" value="ICL_PEPM"/>
    <property type="match status" value="1"/>
</dbReference>
<dbReference type="Gene3D" id="3.20.20.60">
    <property type="entry name" value="Phosphoenolpyruvate-binding domains"/>
    <property type="match status" value="1"/>
</dbReference>
<dbReference type="HAMAP" id="MF_01299">
    <property type="entry name" value="OadC"/>
    <property type="match status" value="1"/>
</dbReference>
<dbReference type="InterPro" id="IPR039556">
    <property type="entry name" value="ICL/PEPM"/>
</dbReference>
<dbReference type="InterPro" id="IPR023687">
    <property type="entry name" value="Oxaloacetate_deCOase_bac"/>
</dbReference>
<dbReference type="InterPro" id="IPR015813">
    <property type="entry name" value="Pyrv/PenolPyrv_kinase-like_dom"/>
</dbReference>
<dbReference type="InterPro" id="IPR040442">
    <property type="entry name" value="Pyrv_kinase-like_dom_sf"/>
</dbReference>
<dbReference type="PANTHER" id="PTHR42905:SF3">
    <property type="entry name" value="OXALOACETATE DECARBOXYLASE"/>
    <property type="match status" value="1"/>
</dbReference>
<dbReference type="PANTHER" id="PTHR42905">
    <property type="entry name" value="PHOSPHOENOLPYRUVATE CARBOXYLASE"/>
    <property type="match status" value="1"/>
</dbReference>
<dbReference type="Pfam" id="PF13714">
    <property type="entry name" value="PEP_mutase"/>
    <property type="match status" value="1"/>
</dbReference>
<dbReference type="SUPFAM" id="SSF51621">
    <property type="entry name" value="Phosphoenolpyruvate/pyruvate domain"/>
    <property type="match status" value="1"/>
</dbReference>
<protein>
    <recommendedName>
        <fullName evidence="1">Oxaloacetate decarboxylase</fullName>
        <ecNumber evidence="1">4.1.1.112</ecNumber>
    </recommendedName>
</protein>
<keyword id="KW-0210">Decarboxylase</keyword>
<keyword id="KW-0456">Lyase</keyword>
<keyword id="KW-0460">Magnesium</keyword>
<keyword id="KW-0479">Metal-binding</keyword>